<name>BETA_XANC8</name>
<accession>Q4UYN5</accession>
<keyword id="KW-0274">FAD</keyword>
<keyword id="KW-0285">Flavoprotein</keyword>
<keyword id="KW-0520">NAD</keyword>
<keyword id="KW-0560">Oxidoreductase</keyword>
<evidence type="ECO:0000255" key="1">
    <source>
        <dbReference type="HAMAP-Rule" id="MF_00750"/>
    </source>
</evidence>
<gene>
    <name evidence="1" type="primary">betA</name>
    <name type="ordered locus">XC_0760</name>
</gene>
<comment type="function">
    <text evidence="1">Involved in the biosynthesis of the osmoprotectant glycine betaine. Catalyzes the oxidation of choline to betaine aldehyde and betaine aldehyde to glycine betaine at the same rate.</text>
</comment>
<comment type="catalytic activity">
    <reaction evidence="1">
        <text>choline + A = betaine aldehyde + AH2</text>
        <dbReference type="Rhea" id="RHEA:17433"/>
        <dbReference type="ChEBI" id="CHEBI:13193"/>
        <dbReference type="ChEBI" id="CHEBI:15354"/>
        <dbReference type="ChEBI" id="CHEBI:15710"/>
        <dbReference type="ChEBI" id="CHEBI:17499"/>
        <dbReference type="EC" id="1.1.99.1"/>
    </reaction>
</comment>
<comment type="catalytic activity">
    <reaction evidence="1">
        <text>betaine aldehyde + NAD(+) + H2O = glycine betaine + NADH + 2 H(+)</text>
        <dbReference type="Rhea" id="RHEA:15305"/>
        <dbReference type="ChEBI" id="CHEBI:15377"/>
        <dbReference type="ChEBI" id="CHEBI:15378"/>
        <dbReference type="ChEBI" id="CHEBI:15710"/>
        <dbReference type="ChEBI" id="CHEBI:17750"/>
        <dbReference type="ChEBI" id="CHEBI:57540"/>
        <dbReference type="ChEBI" id="CHEBI:57945"/>
        <dbReference type="EC" id="1.2.1.8"/>
    </reaction>
</comment>
<comment type="cofactor">
    <cofactor evidence="1">
        <name>FAD</name>
        <dbReference type="ChEBI" id="CHEBI:57692"/>
    </cofactor>
</comment>
<comment type="pathway">
    <text evidence="1">Amine and polyamine biosynthesis; betaine biosynthesis via choline pathway; betaine aldehyde from choline (cytochrome c reductase route): step 1/1.</text>
</comment>
<comment type="similarity">
    <text evidence="1">Belongs to the GMC oxidoreductase family.</text>
</comment>
<protein>
    <recommendedName>
        <fullName evidence="1">Oxygen-dependent choline dehydrogenase</fullName>
        <shortName evidence="1">CDH</shortName>
        <shortName evidence="1">CHD</shortName>
        <ecNumber evidence="1">1.1.99.1</ecNumber>
    </recommendedName>
    <alternativeName>
        <fullName evidence="1">Betaine aldehyde dehydrogenase</fullName>
        <shortName evidence="1">BADH</shortName>
        <ecNumber evidence="1">1.2.1.8</ecNumber>
    </alternativeName>
</protein>
<feature type="chain" id="PRO_0000258937" description="Oxygen-dependent choline dehydrogenase">
    <location>
        <begin position="1"/>
        <end position="556"/>
    </location>
</feature>
<feature type="active site" description="Proton acceptor" evidence="1">
    <location>
        <position position="475"/>
    </location>
</feature>
<feature type="binding site" evidence="1">
    <location>
        <begin position="6"/>
        <end position="35"/>
    </location>
    <ligand>
        <name>FAD</name>
        <dbReference type="ChEBI" id="CHEBI:57692"/>
    </ligand>
</feature>
<organism>
    <name type="scientific">Xanthomonas campestris pv. campestris (strain 8004)</name>
    <dbReference type="NCBI Taxonomy" id="314565"/>
    <lineage>
        <taxon>Bacteria</taxon>
        <taxon>Pseudomonadati</taxon>
        <taxon>Pseudomonadota</taxon>
        <taxon>Gammaproteobacteria</taxon>
        <taxon>Lysobacterales</taxon>
        <taxon>Lysobacteraceae</taxon>
        <taxon>Xanthomonas</taxon>
    </lineage>
</organism>
<reference key="1">
    <citation type="journal article" date="2005" name="Genome Res.">
        <title>Comparative and functional genomic analyses of the pathogenicity of phytopathogen Xanthomonas campestris pv. campestris.</title>
        <authorList>
            <person name="Qian W."/>
            <person name="Jia Y."/>
            <person name="Ren S.-X."/>
            <person name="He Y.-Q."/>
            <person name="Feng J.-X."/>
            <person name="Lu L.-F."/>
            <person name="Sun Q."/>
            <person name="Ying G."/>
            <person name="Tang D.-J."/>
            <person name="Tang H."/>
            <person name="Wu W."/>
            <person name="Hao P."/>
            <person name="Wang L."/>
            <person name="Jiang B.-L."/>
            <person name="Zeng S."/>
            <person name="Gu W.-Y."/>
            <person name="Lu G."/>
            <person name="Rong L."/>
            <person name="Tian Y."/>
            <person name="Yao Z."/>
            <person name="Fu G."/>
            <person name="Chen B."/>
            <person name="Fang R."/>
            <person name="Qiang B."/>
            <person name="Chen Z."/>
            <person name="Zhao G.-P."/>
            <person name="Tang J.-L."/>
            <person name="He C."/>
        </authorList>
    </citation>
    <scope>NUCLEOTIDE SEQUENCE [LARGE SCALE GENOMIC DNA]</scope>
    <source>
        <strain>8004</strain>
    </source>
</reference>
<proteinExistence type="inferred from homology"/>
<dbReference type="EC" id="1.1.99.1" evidence="1"/>
<dbReference type="EC" id="1.2.1.8" evidence="1"/>
<dbReference type="EMBL" id="CP000050">
    <property type="protein sequence ID" value="AAY47838.1"/>
    <property type="molecule type" value="Genomic_DNA"/>
</dbReference>
<dbReference type="RefSeq" id="WP_011038502.1">
    <property type="nucleotide sequence ID" value="NZ_CP155948.1"/>
</dbReference>
<dbReference type="SMR" id="Q4UYN5"/>
<dbReference type="KEGG" id="xcb:XC_0760"/>
<dbReference type="HOGENOM" id="CLU_002865_7_1_6"/>
<dbReference type="UniPathway" id="UPA00529">
    <property type="reaction ID" value="UER00385"/>
</dbReference>
<dbReference type="Proteomes" id="UP000000420">
    <property type="component" value="Chromosome"/>
</dbReference>
<dbReference type="GO" id="GO:0016020">
    <property type="term" value="C:membrane"/>
    <property type="evidence" value="ECO:0007669"/>
    <property type="project" value="TreeGrafter"/>
</dbReference>
<dbReference type="GO" id="GO:0008802">
    <property type="term" value="F:betaine-aldehyde dehydrogenase (NAD+) activity"/>
    <property type="evidence" value="ECO:0007669"/>
    <property type="project" value="UniProtKB-EC"/>
</dbReference>
<dbReference type="GO" id="GO:0008812">
    <property type="term" value="F:choline dehydrogenase activity"/>
    <property type="evidence" value="ECO:0007669"/>
    <property type="project" value="UniProtKB-UniRule"/>
</dbReference>
<dbReference type="GO" id="GO:0050660">
    <property type="term" value="F:flavin adenine dinucleotide binding"/>
    <property type="evidence" value="ECO:0007669"/>
    <property type="project" value="InterPro"/>
</dbReference>
<dbReference type="GO" id="GO:0019285">
    <property type="term" value="P:glycine betaine biosynthetic process from choline"/>
    <property type="evidence" value="ECO:0007669"/>
    <property type="project" value="UniProtKB-UniRule"/>
</dbReference>
<dbReference type="Gene3D" id="3.50.50.60">
    <property type="entry name" value="FAD/NAD(P)-binding domain"/>
    <property type="match status" value="1"/>
</dbReference>
<dbReference type="Gene3D" id="3.30.560.10">
    <property type="entry name" value="Glucose Oxidase, domain 3"/>
    <property type="match status" value="1"/>
</dbReference>
<dbReference type="HAMAP" id="MF_00750">
    <property type="entry name" value="Choline_dehydrogen"/>
    <property type="match status" value="1"/>
</dbReference>
<dbReference type="InterPro" id="IPR011533">
    <property type="entry name" value="BetA"/>
</dbReference>
<dbReference type="InterPro" id="IPR036188">
    <property type="entry name" value="FAD/NAD-bd_sf"/>
</dbReference>
<dbReference type="InterPro" id="IPR012132">
    <property type="entry name" value="GMC_OxRdtase"/>
</dbReference>
<dbReference type="InterPro" id="IPR000172">
    <property type="entry name" value="GMC_OxRdtase_N"/>
</dbReference>
<dbReference type="InterPro" id="IPR007867">
    <property type="entry name" value="GMC_OxRtase_C"/>
</dbReference>
<dbReference type="NCBIfam" id="TIGR01810">
    <property type="entry name" value="betA"/>
    <property type="match status" value="1"/>
</dbReference>
<dbReference type="NCBIfam" id="NF002550">
    <property type="entry name" value="PRK02106.1"/>
    <property type="match status" value="1"/>
</dbReference>
<dbReference type="PANTHER" id="PTHR11552:SF147">
    <property type="entry name" value="CHOLINE DEHYDROGENASE, MITOCHONDRIAL"/>
    <property type="match status" value="1"/>
</dbReference>
<dbReference type="PANTHER" id="PTHR11552">
    <property type="entry name" value="GLUCOSE-METHANOL-CHOLINE GMC OXIDOREDUCTASE"/>
    <property type="match status" value="1"/>
</dbReference>
<dbReference type="Pfam" id="PF05199">
    <property type="entry name" value="GMC_oxred_C"/>
    <property type="match status" value="1"/>
</dbReference>
<dbReference type="Pfam" id="PF00732">
    <property type="entry name" value="GMC_oxred_N"/>
    <property type="match status" value="1"/>
</dbReference>
<dbReference type="PIRSF" id="PIRSF000137">
    <property type="entry name" value="Alcohol_oxidase"/>
    <property type="match status" value="1"/>
</dbReference>
<dbReference type="SUPFAM" id="SSF54373">
    <property type="entry name" value="FAD-linked reductases, C-terminal domain"/>
    <property type="match status" value="1"/>
</dbReference>
<dbReference type="SUPFAM" id="SSF51905">
    <property type="entry name" value="FAD/NAD(P)-binding domain"/>
    <property type="match status" value="1"/>
</dbReference>
<dbReference type="PROSITE" id="PS00623">
    <property type="entry name" value="GMC_OXRED_1"/>
    <property type="match status" value="1"/>
</dbReference>
<dbReference type="PROSITE" id="PS00624">
    <property type="entry name" value="GMC_OXRED_2"/>
    <property type="match status" value="1"/>
</dbReference>
<sequence>MQREYDYIIIGAGSAGNVLAARLTEDPGVSVLLLEAGGPDYRLDFRTQMPAALAFPLQGRRYNWAYETEPEPHMDNRRMECGRGKGLGGSSLINGMCYIRGNALDFDHWAKRPGLEDWGYRDVLPYFRKAETRDIGANDYHGGEGPVSVATPKNDNNVLFQAMVDAGVQAGYPRTDDLNGYQQEGFGPMDRTVTPQGRRASTARGYLDMAKPRDSLHIVTHATTDRILFAGKRAVGVHYLVGNSSEGIDAHARREVLVCAGAIASPQLLQRSGVGAPDLLRALDVQLVHDLPGVGQNLQDHLEVYMQYACTKPVSLYPALQWWNQPAIGAEWLFAGTGTGASNQFEAGGFIRTREEFDWPNIQYHFLPVAINYNGSNAVKEHGFQAHVGSMRTPSRGRVHARSRDPRQHPSILFNYQSTDQDWQEFRDAIRITREIIAQPALDPYRGREISPSADCKTDAELDAFVRARAETAYHPSCSCAMGTDDMAVVDGQGRVHGMEGLRVIDASIMPRIITGNLNATTIMIAEKIVDRIRGRAPLPRSTADYYVAGDAPVRR</sequence>